<dbReference type="EC" id="1.8.3.4" evidence="2"/>
<dbReference type="EMBL" id="BC094129">
    <property type="protein sequence ID" value="AAH94129.1"/>
    <property type="molecule type" value="mRNA"/>
</dbReference>
<dbReference type="SMR" id="Q52KZ7"/>
<dbReference type="DNASU" id="734446"/>
<dbReference type="GeneID" id="734446"/>
<dbReference type="KEGG" id="xla:734446"/>
<dbReference type="AGR" id="Xenbase:XB-GENE-959080"/>
<dbReference type="CTD" id="734446"/>
<dbReference type="Xenbase" id="XB-GENE-959080">
    <property type="gene designation" value="selenbp1.L"/>
</dbReference>
<dbReference type="OMA" id="AYDFWWH"/>
<dbReference type="OrthoDB" id="10252446at2759"/>
<dbReference type="Proteomes" id="UP000186698">
    <property type="component" value="Chromosome 8L"/>
</dbReference>
<dbReference type="Bgee" id="734446">
    <property type="expression patterns" value="Expressed in zone of skin and 11 other cell types or tissues"/>
</dbReference>
<dbReference type="GO" id="GO:0005829">
    <property type="term" value="C:cytosol"/>
    <property type="evidence" value="ECO:0007669"/>
    <property type="project" value="UniProtKB-SubCell"/>
</dbReference>
<dbReference type="GO" id="GO:0016020">
    <property type="term" value="C:membrane"/>
    <property type="evidence" value="ECO:0007669"/>
    <property type="project" value="UniProtKB-SubCell"/>
</dbReference>
<dbReference type="GO" id="GO:0005634">
    <property type="term" value="C:nucleus"/>
    <property type="evidence" value="ECO:0007669"/>
    <property type="project" value="UniProtKB-SubCell"/>
</dbReference>
<dbReference type="GO" id="GO:0018549">
    <property type="term" value="F:methanethiol oxidase activity"/>
    <property type="evidence" value="ECO:0007669"/>
    <property type="project" value="UniProtKB-EC"/>
</dbReference>
<dbReference type="GO" id="GO:0008430">
    <property type="term" value="F:selenium binding"/>
    <property type="evidence" value="ECO:0007669"/>
    <property type="project" value="InterPro"/>
</dbReference>
<dbReference type="GO" id="GO:0015031">
    <property type="term" value="P:protein transport"/>
    <property type="evidence" value="ECO:0007669"/>
    <property type="project" value="UniProtKB-KW"/>
</dbReference>
<dbReference type="Gene3D" id="2.130.10.10">
    <property type="entry name" value="YVTN repeat-like/Quinoprotein amine dehydrogenase"/>
    <property type="match status" value="1"/>
</dbReference>
<dbReference type="InterPro" id="IPR008826">
    <property type="entry name" value="Se-bd"/>
</dbReference>
<dbReference type="InterPro" id="IPR015943">
    <property type="entry name" value="WD40/YVTN_repeat-like_dom_sf"/>
</dbReference>
<dbReference type="PANTHER" id="PTHR23300">
    <property type="entry name" value="METHANETHIOL OXIDASE"/>
    <property type="match status" value="1"/>
</dbReference>
<dbReference type="PANTHER" id="PTHR23300:SF0">
    <property type="entry name" value="METHANETHIOL OXIDASE"/>
    <property type="match status" value="1"/>
</dbReference>
<dbReference type="Pfam" id="PF05694">
    <property type="entry name" value="SBP56"/>
    <property type="match status" value="1"/>
</dbReference>
<dbReference type="SUPFAM" id="SSF75011">
    <property type="entry name" value="3-carboxy-cis,cis-mucoante lactonizing enzyme"/>
    <property type="match status" value="1"/>
</dbReference>
<organism>
    <name type="scientific">Xenopus laevis</name>
    <name type="common">African clawed frog</name>
    <dbReference type="NCBI Taxonomy" id="8355"/>
    <lineage>
        <taxon>Eukaryota</taxon>
        <taxon>Metazoa</taxon>
        <taxon>Chordata</taxon>
        <taxon>Craniata</taxon>
        <taxon>Vertebrata</taxon>
        <taxon>Euteleostomi</taxon>
        <taxon>Amphibia</taxon>
        <taxon>Batrachia</taxon>
        <taxon>Anura</taxon>
        <taxon>Pipoidea</taxon>
        <taxon>Pipidae</taxon>
        <taxon>Xenopodinae</taxon>
        <taxon>Xenopus</taxon>
        <taxon>Xenopus</taxon>
    </lineage>
</organism>
<proteinExistence type="evidence at transcript level"/>
<sequence>MAKCGSCGPGYKSPLDAMKGPREEIVYLPCIYRSTGINKPDYLATVDVDPKSPSYSQVIHRLPMPNVNDELHHSGWNTCSSCYGDSSKVRNKLILPCLISSRIYVVDVGSDPRAPRIHKTVEPYEVFWKCGLANPHTSHCLGCGEIMISSLGDPCGNGKGGFVLLDGETFEVKGNWEVEGESAQFGYDFWYQPRHNVMISTEWGAPKAFALGFKMEDVQAGHYGHSLNVWDWTEHRLVQTIDLGKDGLIPLEIRFLHNPDADQGLVGCALSSSIFRFYKEKDGKWAAEKVIQVPSKKVEGWPMPEMPGLITDILISLDDRFLYFSNWLHGDIRQYDITDTRNPKLVGQIFLGGSIQRGGPVTVLEDKELECQPDPVTVKGKIIPGGPQMIQLSLDGKRIYVTSSLYSIWDKQFYPDLLKEGAVMLQIDVDTKKGGLKLNPNFLVDFGKEPDGPVLAHEIRYPGGDCTSDIWI</sequence>
<comment type="function">
    <text evidence="2 3">Catalyzes the oxidation of methanethiol, an organosulfur compound known to be produced in substantial amounts by gut bacteria (By similarity). Selenium-binding protein which may be involved in the sensing of reactive xenobiotics in the cytoplasm. May be involved in intra-Golgi protein transport (By similarity).</text>
</comment>
<comment type="catalytic activity">
    <reaction evidence="2">
        <text>methanethiol + O2 + H2O = hydrogen sulfide + formaldehyde + H2O2 + H(+)</text>
        <dbReference type="Rhea" id="RHEA:11812"/>
        <dbReference type="ChEBI" id="CHEBI:15377"/>
        <dbReference type="ChEBI" id="CHEBI:15378"/>
        <dbReference type="ChEBI" id="CHEBI:15379"/>
        <dbReference type="ChEBI" id="CHEBI:16007"/>
        <dbReference type="ChEBI" id="CHEBI:16240"/>
        <dbReference type="ChEBI" id="CHEBI:16842"/>
        <dbReference type="ChEBI" id="CHEBI:29919"/>
        <dbReference type="EC" id="1.8.3.4"/>
    </reaction>
</comment>
<comment type="pathway">
    <text evidence="2">Organosulfur degradation.</text>
</comment>
<comment type="subcellular location">
    <subcellularLocation>
        <location evidence="1">Nucleus</location>
    </subcellularLocation>
    <subcellularLocation>
        <location evidence="1">Cytoplasm</location>
        <location evidence="1">Cytosol</location>
    </subcellularLocation>
    <subcellularLocation>
        <location evidence="1">Membrane</location>
        <topology evidence="1">Peripheral membrane protein</topology>
    </subcellularLocation>
</comment>
<comment type="similarity">
    <text evidence="4">Belongs to the selenium-binding protein family.</text>
</comment>
<protein>
    <recommendedName>
        <fullName evidence="2">Methanethiol oxidase</fullName>
        <shortName evidence="2">MTO</shortName>
        <ecNumber evidence="2">1.8.3.4</ecNumber>
    </recommendedName>
    <alternativeName>
        <fullName>Selenium-binding protein 1-A</fullName>
    </alternativeName>
</protein>
<gene>
    <name type="primary">selenbp1-a</name>
</gene>
<evidence type="ECO:0000250" key="1"/>
<evidence type="ECO:0000250" key="2">
    <source>
        <dbReference type="UniProtKB" id="Q13228"/>
    </source>
</evidence>
<evidence type="ECO:0000250" key="3">
    <source>
        <dbReference type="UniProtKB" id="Q8VIF7"/>
    </source>
</evidence>
<evidence type="ECO:0000305" key="4"/>
<keyword id="KW-0963">Cytoplasm</keyword>
<keyword id="KW-0472">Membrane</keyword>
<keyword id="KW-0539">Nucleus</keyword>
<keyword id="KW-0560">Oxidoreductase</keyword>
<keyword id="KW-0653">Protein transport</keyword>
<keyword id="KW-1185">Reference proteome</keyword>
<keyword id="KW-0711">Selenium</keyword>
<keyword id="KW-0813">Transport</keyword>
<name>SBP1A_XENLA</name>
<accession>Q52KZ7</accession>
<reference key="1">
    <citation type="submission" date="2005-04" db="EMBL/GenBank/DDBJ databases">
        <authorList>
            <consortium name="NIH - Xenopus Gene Collection (XGC) project"/>
        </authorList>
    </citation>
    <scope>NUCLEOTIDE SEQUENCE [LARGE SCALE MRNA]</scope>
    <source>
        <tissue>Brain</tissue>
    </source>
</reference>
<feature type="chain" id="PRO_0000289065" description="Methanethiol oxidase">
    <location>
        <begin position="1"/>
        <end position="472"/>
    </location>
</feature>